<comment type="function">
    <text evidence="2">May act as an antimicrobial peptide.</text>
</comment>
<comment type="subcellular location">
    <subcellularLocation>
        <location evidence="1">Secreted</location>
    </subcellularLocation>
</comment>
<comment type="tissue specificity">
    <text evidence="4">Expressed in skin glands.</text>
</comment>
<comment type="mass spectrometry"/>
<comment type="similarity">
    <text evidence="3">Belongs to the Frog skin active peptide (FSAP) family. Septenin subfamily.</text>
</comment>
<accession>C0HLX3</accession>
<evidence type="ECO:0000269" key="1">
    <source>
    </source>
</evidence>
<evidence type="ECO:0000303" key="2">
    <source>
    </source>
</evidence>
<evidence type="ECO:0000305" key="3"/>
<evidence type="ECO:0000305" key="4">
    <source>
    </source>
</evidence>
<proteinExistence type="evidence at protein level"/>
<dbReference type="GO" id="GO:0005576">
    <property type="term" value="C:extracellular region"/>
    <property type="evidence" value="ECO:0007669"/>
    <property type="project" value="UniProtKB-SubCell"/>
</dbReference>
<sequence>IIGDTINGAIANANNIVGKIGII</sequence>
<organism>
    <name type="scientific">Osteopilus septentrionalis</name>
    <name type="common">Cuban treefrog</name>
    <dbReference type="NCBI Taxonomy" id="317373"/>
    <lineage>
        <taxon>Eukaryota</taxon>
        <taxon>Metazoa</taxon>
        <taxon>Chordata</taxon>
        <taxon>Craniata</taxon>
        <taxon>Vertebrata</taxon>
        <taxon>Euteleostomi</taxon>
        <taxon>Amphibia</taxon>
        <taxon>Batrachia</taxon>
        <taxon>Anura</taxon>
        <taxon>Neobatrachia</taxon>
        <taxon>Hyloidea</taxon>
        <taxon>Hylidae</taxon>
        <taxon>Hylinae</taxon>
        <taxon>Lophiohylini</taxon>
        <taxon>Osteopilus</taxon>
    </lineage>
</organism>
<reference key="1">
    <citation type="journal article" date="2021" name="Rapid Commun. Mass Spectrom.">
        <title>Manual mass spectrometry de novo sequencing of the anionic host defense peptides of the Cuban Treefrog Osteopilus septentrionalis.</title>
        <authorList>
            <person name="Samgina T.Y."/>
            <person name="Tolpina M.D."/>
            <person name="Surin A.K."/>
            <person name="Kovalev S.V."/>
            <person name="Bosch R.A."/>
            <person name="Alonso I.P."/>
            <person name="Garcia F.A."/>
            <person name="Gonzalez Lopez L.J."/>
            <person name="Lebedev A.T."/>
        </authorList>
    </citation>
    <scope>PROTEIN SEQUENCE</scope>
    <scope>MASS SPECTROMETRY</scope>
</reference>
<keyword id="KW-0903">Direct protein sequencing</keyword>
<keyword id="KW-0964">Secreted</keyword>
<protein>
    <recommendedName>
        <fullName evidence="2">Septenin 2a</fullName>
    </recommendedName>
</protein>
<name>SEP2A_OSTSE</name>
<feature type="chain" id="PRO_0000453946" description="Septenin 2a">
    <location>
        <begin position="1"/>
        <end position="23"/>
    </location>
</feature>
<feature type="unsure residue" description="L or I" evidence="1">
    <location>
        <position position="1"/>
    </location>
</feature>
<feature type="unsure residue" description="L or I" evidence="1">
    <location>
        <position position="2"/>
    </location>
</feature>
<feature type="unsure residue" description="L or I" evidence="1">
    <location>
        <position position="6"/>
    </location>
</feature>
<feature type="unsure residue" description="L or I" evidence="1">
    <location>
        <position position="10"/>
    </location>
</feature>
<feature type="unsure residue" description="L or I" evidence="1">
    <location>
        <position position="16"/>
    </location>
</feature>
<feature type="unsure residue" description="L or I" evidence="1">
    <location>
        <position position="20"/>
    </location>
</feature>
<feature type="unsure residue" description="L or I" evidence="1">
    <location>
        <position position="22"/>
    </location>
</feature>
<feature type="unsure residue" description="L or I" evidence="1">
    <location>
        <position position="23"/>
    </location>
</feature>